<dbReference type="EC" id="2.8.1.-"/>
<dbReference type="EMBL" id="L42023">
    <property type="protein sequence ID" value="AAC23018.1"/>
    <property type="molecule type" value="Genomic_DNA"/>
</dbReference>
<dbReference type="PIR" id="A64120">
    <property type="entry name" value="A64120"/>
</dbReference>
<dbReference type="RefSeq" id="NP_439522.1">
    <property type="nucleotide sequence ID" value="NC_000907.1"/>
</dbReference>
<dbReference type="SMR" id="P45184"/>
<dbReference type="STRING" id="71421.HI_1371"/>
<dbReference type="EnsemblBacteria" id="AAC23018">
    <property type="protein sequence ID" value="AAC23018"/>
    <property type="gene ID" value="HI_1371"/>
</dbReference>
<dbReference type="KEGG" id="hin:HI_1371"/>
<dbReference type="PATRIC" id="fig|71421.8.peg.1425"/>
<dbReference type="eggNOG" id="COG2920">
    <property type="taxonomic scope" value="Bacteria"/>
</dbReference>
<dbReference type="HOGENOM" id="CLU_153199_1_0_6"/>
<dbReference type="OrthoDB" id="9786347at2"/>
<dbReference type="PhylomeDB" id="P45184"/>
<dbReference type="BioCyc" id="HINF71421:G1GJ1-1396-MONOMER"/>
<dbReference type="Proteomes" id="UP000000579">
    <property type="component" value="Chromosome"/>
</dbReference>
<dbReference type="GO" id="GO:0005737">
    <property type="term" value="C:cytoplasm"/>
    <property type="evidence" value="ECO:0007669"/>
    <property type="project" value="UniProtKB-SubCell"/>
</dbReference>
<dbReference type="GO" id="GO:0097163">
    <property type="term" value="F:sulfur carrier activity"/>
    <property type="evidence" value="ECO:0000318"/>
    <property type="project" value="GO_Central"/>
</dbReference>
<dbReference type="GO" id="GO:0016740">
    <property type="term" value="F:transferase activity"/>
    <property type="evidence" value="ECO:0007669"/>
    <property type="project" value="UniProtKB-KW"/>
</dbReference>
<dbReference type="GO" id="GO:0002143">
    <property type="term" value="P:tRNA wobble position uridine thiolation"/>
    <property type="evidence" value="ECO:0000318"/>
    <property type="project" value="GO_Central"/>
</dbReference>
<dbReference type="FunFam" id="1.10.10.370:FF:000001">
    <property type="entry name" value="Sulfurtransferase"/>
    <property type="match status" value="1"/>
</dbReference>
<dbReference type="Gene3D" id="3.30.1420.10">
    <property type="match status" value="1"/>
</dbReference>
<dbReference type="Gene3D" id="1.10.10.370">
    <property type="entry name" value="DsrC-like protein, C-terminal domain"/>
    <property type="match status" value="1"/>
</dbReference>
<dbReference type="InterPro" id="IPR042072">
    <property type="entry name" value="DsrC-like_C"/>
</dbReference>
<dbReference type="InterPro" id="IPR025526">
    <property type="entry name" value="DsrC-like_dom_sf"/>
</dbReference>
<dbReference type="InterPro" id="IPR043163">
    <property type="entry name" value="DsrC-like_N"/>
</dbReference>
<dbReference type="InterPro" id="IPR007453">
    <property type="entry name" value="DsrC/TusE"/>
</dbReference>
<dbReference type="NCBIfam" id="TIGR03342">
    <property type="entry name" value="dsrC_tusE_dsvC"/>
    <property type="match status" value="1"/>
</dbReference>
<dbReference type="PANTHER" id="PTHR37010">
    <property type="entry name" value="SULFURTRANSFERASE TUSE"/>
    <property type="match status" value="1"/>
</dbReference>
<dbReference type="PANTHER" id="PTHR37010:SF1">
    <property type="entry name" value="SULFURTRANSFERASE TUSE"/>
    <property type="match status" value="1"/>
</dbReference>
<dbReference type="Pfam" id="PF04358">
    <property type="entry name" value="DsrC"/>
    <property type="match status" value="1"/>
</dbReference>
<dbReference type="PIRSF" id="PIRSF006223">
    <property type="entry name" value="DsrC_TusE"/>
    <property type="match status" value="1"/>
</dbReference>
<dbReference type="SUPFAM" id="SSF69721">
    <property type="entry name" value="DsrC, the gamma subunit of dissimilatory sulfite reductase"/>
    <property type="match status" value="1"/>
</dbReference>
<name>TUSE_HAEIN</name>
<protein>
    <recommendedName>
        <fullName>Sulfurtransferase TusE homolog</fullName>
        <ecNumber>2.8.1.-</ecNumber>
    </recommendedName>
</protein>
<evidence type="ECO:0000250" key="1"/>
<evidence type="ECO:0000305" key="2"/>
<comment type="function">
    <text evidence="1">Could be part of a sulfur-relay system.</text>
</comment>
<comment type="subcellular location">
    <subcellularLocation>
        <location evidence="1">Cytoplasm</location>
    </subcellularLocation>
</comment>
<comment type="similarity">
    <text evidence="2">Belongs to the DsrC/TusE family.</text>
</comment>
<proteinExistence type="inferred from homology"/>
<reference key="1">
    <citation type="journal article" date="1995" name="Science">
        <title>Whole-genome random sequencing and assembly of Haemophilus influenzae Rd.</title>
        <authorList>
            <person name="Fleischmann R.D."/>
            <person name="Adams M.D."/>
            <person name="White O."/>
            <person name="Clayton R.A."/>
            <person name="Kirkness E.F."/>
            <person name="Kerlavage A.R."/>
            <person name="Bult C.J."/>
            <person name="Tomb J.-F."/>
            <person name="Dougherty B.A."/>
            <person name="Merrick J.M."/>
            <person name="McKenney K."/>
            <person name="Sutton G.G."/>
            <person name="FitzHugh W."/>
            <person name="Fields C.A."/>
            <person name="Gocayne J.D."/>
            <person name="Scott J.D."/>
            <person name="Shirley R."/>
            <person name="Liu L.-I."/>
            <person name="Glodek A."/>
            <person name="Kelley J.M."/>
            <person name="Weidman J.F."/>
            <person name="Phillips C.A."/>
            <person name="Spriggs T."/>
            <person name="Hedblom E."/>
            <person name="Cotton M.D."/>
            <person name="Utterback T.R."/>
            <person name="Hanna M.C."/>
            <person name="Nguyen D.T."/>
            <person name="Saudek D.M."/>
            <person name="Brandon R.C."/>
            <person name="Fine L.D."/>
            <person name="Fritchman J.L."/>
            <person name="Fuhrmann J.L."/>
            <person name="Geoghagen N.S.M."/>
            <person name="Gnehm C.L."/>
            <person name="McDonald L.A."/>
            <person name="Small K.V."/>
            <person name="Fraser C.M."/>
            <person name="Smith H.O."/>
            <person name="Venter J.C."/>
        </authorList>
    </citation>
    <scope>NUCLEOTIDE SEQUENCE [LARGE SCALE GENOMIC DNA]</scope>
    <source>
        <strain>ATCC 51907 / DSM 11121 / KW20 / Rd</strain>
    </source>
</reference>
<gene>
    <name type="primary">tusE</name>
    <name type="ordered locus">HI_1371</name>
</gene>
<organism>
    <name type="scientific">Haemophilus influenzae (strain ATCC 51907 / DSM 11121 / KW20 / Rd)</name>
    <dbReference type="NCBI Taxonomy" id="71421"/>
    <lineage>
        <taxon>Bacteria</taxon>
        <taxon>Pseudomonadati</taxon>
        <taxon>Pseudomonadota</taxon>
        <taxon>Gammaproteobacteria</taxon>
        <taxon>Pasteurellales</taxon>
        <taxon>Pasteurellaceae</taxon>
        <taxon>Haemophilus</taxon>
    </lineage>
</organism>
<feature type="chain" id="PRO_0000168791" description="Sulfurtransferase TusE homolog">
    <location>
        <begin position="1"/>
        <end position="109"/>
    </location>
</feature>
<feature type="active site" description="Cysteine persulfide intermediate" evidence="1">
    <location>
        <position position="108"/>
    </location>
</feature>
<sequence length="109" mass="12336">MLNINGIEVETDKDGYLLHSQQWNEDAARAIAQLESIELTDAHWEVIYFVRDFYQEYNTSPAIRMLVKAMAEKLGADKGNSRYLQHLFPEGPAKQATKLAGLPKPAKCL</sequence>
<accession>P45184</accession>
<keyword id="KW-0963">Cytoplasm</keyword>
<keyword id="KW-1185">Reference proteome</keyword>
<keyword id="KW-0808">Transferase</keyword>